<dbReference type="EMBL" id="AY952414">
    <property type="protein sequence ID" value="AAX84498.1"/>
    <property type="molecule type" value="Genomic_DNA"/>
</dbReference>
<dbReference type="GO" id="GO:0009507">
    <property type="term" value="C:chloroplast"/>
    <property type="evidence" value="ECO:0007669"/>
    <property type="project" value="UniProtKB-SubCell"/>
</dbReference>
<dbReference type="GO" id="GO:0003723">
    <property type="term" value="F:RNA binding"/>
    <property type="evidence" value="ECO:0007669"/>
    <property type="project" value="UniProtKB-KW"/>
</dbReference>
<dbReference type="GO" id="GO:0006397">
    <property type="term" value="P:mRNA processing"/>
    <property type="evidence" value="ECO:0007669"/>
    <property type="project" value="UniProtKB-KW"/>
</dbReference>
<dbReference type="GO" id="GO:0008380">
    <property type="term" value="P:RNA splicing"/>
    <property type="evidence" value="ECO:0007669"/>
    <property type="project" value="UniProtKB-UniRule"/>
</dbReference>
<dbReference type="GO" id="GO:0008033">
    <property type="term" value="P:tRNA processing"/>
    <property type="evidence" value="ECO:0007669"/>
    <property type="project" value="UniProtKB-KW"/>
</dbReference>
<dbReference type="HAMAP" id="MF_01390">
    <property type="entry name" value="MatK"/>
    <property type="match status" value="1"/>
</dbReference>
<dbReference type="InterPro" id="IPR024937">
    <property type="entry name" value="Domain_X"/>
</dbReference>
<dbReference type="InterPro" id="IPR002866">
    <property type="entry name" value="Maturase_MatK"/>
</dbReference>
<dbReference type="InterPro" id="IPR024942">
    <property type="entry name" value="Maturase_MatK_N"/>
</dbReference>
<dbReference type="PANTHER" id="PTHR34811">
    <property type="entry name" value="MATURASE K"/>
    <property type="match status" value="1"/>
</dbReference>
<dbReference type="PANTHER" id="PTHR34811:SF1">
    <property type="entry name" value="MATURASE K"/>
    <property type="match status" value="1"/>
</dbReference>
<dbReference type="Pfam" id="PF01348">
    <property type="entry name" value="Intron_maturas2"/>
    <property type="match status" value="1"/>
</dbReference>
<dbReference type="Pfam" id="PF01824">
    <property type="entry name" value="MatK_N"/>
    <property type="match status" value="1"/>
</dbReference>
<sequence>MEELQGYLEKDRSWQQHFLYPLLFKEYIYIFAHDRGLNGSIFYESAEIFGYGSKYSSLLVKRSIIRMYQQNYLIYSVNDSNQNRFVGHNNFFYFHFFYSQMILEGFAVIVEIPFLLRLVSFLEEKKIPKSQNLNLRSIHSIFPFFEDKLSHLNYVSDILIPYPIHLKILVQILQFWIQDVPSLHLLRFFLHEYHNWNSLITPNNSIFLFSKENKRLFRFPYNFYVSECEFVLVFLRKQSSYLRLTSSGAFLERTHFYGKIEHLIVVVVRRNYFQKTLCFFKDPFMHYIRYQGKAILVSKGTHLLMKKWKCHLVNFWQYYFNSWSQPYRIHINQLSNCSFYFLGYLSSVLINLSAVRNQMLENSFLIDTVFKKFDTRVPVIPLIGSLSKAKFCTVSGHPISKPIWTDLSDCDIIDRFGRICRNLSHYHSGSSKKQSLYRIKYILRFSCAKTLARKHKSMVRAFLQRLGSGLLEEFFMEEEQVVSLIFPKLTSFSLHESHIERIWYLDIIRINDLVNYS</sequence>
<proteinExistence type="inferred from homology"/>
<name>MATK_CARMI</name>
<geneLocation type="chloroplast"/>
<feature type="chain" id="PRO_0000143313" description="Maturase K">
    <location>
        <begin position="1"/>
        <end position="517"/>
    </location>
</feature>
<accession>Q52TG9</accession>
<evidence type="ECO:0000255" key="1">
    <source>
        <dbReference type="HAMAP-Rule" id="MF_01390"/>
    </source>
</evidence>
<gene>
    <name evidence="1" type="primary">matK</name>
</gene>
<comment type="function">
    <text evidence="1">Usually encoded in the trnK tRNA gene intron. Probably assists in splicing its own and other chloroplast group II introns.</text>
</comment>
<comment type="subcellular location">
    <subcellularLocation>
        <location>Plastid</location>
        <location>Chloroplast</location>
    </subcellularLocation>
</comment>
<comment type="similarity">
    <text evidence="1">Belongs to the intron maturase 2 family. MatK subfamily.</text>
</comment>
<protein>
    <recommendedName>
        <fullName evidence="1">Maturase K</fullName>
    </recommendedName>
    <alternativeName>
        <fullName evidence="1">Intron maturase</fullName>
    </alternativeName>
</protein>
<organism>
    <name type="scientific">Caryota mitis</name>
    <name type="common">Burmese fishtail palm</name>
    <dbReference type="NCBI Taxonomy" id="4714"/>
    <lineage>
        <taxon>Eukaryota</taxon>
        <taxon>Viridiplantae</taxon>
        <taxon>Streptophyta</taxon>
        <taxon>Embryophyta</taxon>
        <taxon>Tracheophyta</taxon>
        <taxon>Spermatophyta</taxon>
        <taxon>Magnoliopsida</taxon>
        <taxon>Liliopsida</taxon>
        <taxon>Arecaceae</taxon>
        <taxon>Coryphoideae</taxon>
        <taxon>Caryoteae</taxon>
        <taxon>Caryota</taxon>
    </lineage>
</organism>
<keyword id="KW-0150">Chloroplast</keyword>
<keyword id="KW-0507">mRNA processing</keyword>
<keyword id="KW-0934">Plastid</keyword>
<keyword id="KW-0694">RNA-binding</keyword>
<keyword id="KW-0819">tRNA processing</keyword>
<reference key="1">
    <citation type="submission" date="2005-03" db="EMBL/GenBank/DDBJ databases">
        <title>Monocotyledons phylogeny based on three genes (matK, rbcL and 18S rDNA) sequences.</title>
        <authorList>
            <person name="Li X.X."/>
            <person name="Zhou Z.K."/>
        </authorList>
    </citation>
    <scope>NUCLEOTIDE SEQUENCE [GENOMIC DNA]</scope>
</reference>